<sequence length="273" mass="32599">MKDMKMQSSPETMMTRIPTPDPHSTGVREDAMDSVCKPWKLYENPYYCSSQSQQHQHQRKAFIWDLNFIKVFMESELGKAQDEIKELKAELDYERKARRRAELMIKKLAKDVEEERMAREAEEMQNKRLFKELSSEKSEMVRMKRDLEEERQMHRLAEVLREERVQMKLMDARLFLEEKLSELEEANRQGERERNRMMKPKILERACSSPARRRCENPQIKRGINPFPRVMRAIRSKSEKWGSKLECQKVQLKILLRQKTTPRCTPLLSSPPP</sequence>
<organism>
    <name type="scientific">Arabidopsis thaliana</name>
    <name type="common">Mouse-ear cress</name>
    <dbReference type="NCBI Taxonomy" id="3702"/>
    <lineage>
        <taxon>Eukaryota</taxon>
        <taxon>Viridiplantae</taxon>
        <taxon>Streptophyta</taxon>
        <taxon>Embryophyta</taxon>
        <taxon>Tracheophyta</taxon>
        <taxon>Spermatophyta</taxon>
        <taxon>Magnoliopsida</taxon>
        <taxon>eudicotyledons</taxon>
        <taxon>Gunneridae</taxon>
        <taxon>Pentapetalae</taxon>
        <taxon>rosids</taxon>
        <taxon>malvids</taxon>
        <taxon>Brassicales</taxon>
        <taxon>Brassicaceae</taxon>
        <taxon>Camelineae</taxon>
        <taxon>Arabidopsis</taxon>
    </lineage>
</organism>
<protein>
    <recommendedName>
        <fullName>Protein BRANCHLESS TRICHOME</fullName>
    </recommendedName>
</protein>
<proteinExistence type="evidence at protein level"/>
<gene>
    <name type="primary">BLT</name>
    <name type="ordered locus">At1g64690</name>
    <name type="ORF">F13O11.1</name>
    <name type="ORF">F1N19.26</name>
</gene>
<dbReference type="EMBL" id="AC006193">
    <property type="protein sequence ID" value="AAD38245.1"/>
    <property type="status" value="ALT_SEQ"/>
    <property type="molecule type" value="Genomic_DNA"/>
</dbReference>
<dbReference type="EMBL" id="AC009519">
    <property type="protein sequence ID" value="AAF19682.1"/>
    <property type="status" value="ALT_SEQ"/>
    <property type="molecule type" value="Genomic_DNA"/>
</dbReference>
<dbReference type="EMBL" id="CP002684">
    <property type="protein sequence ID" value="AEE34274.1"/>
    <property type="molecule type" value="Genomic_DNA"/>
</dbReference>
<dbReference type="EMBL" id="CP002684">
    <property type="protein sequence ID" value="ANM59272.1"/>
    <property type="molecule type" value="Genomic_DNA"/>
</dbReference>
<dbReference type="EMBL" id="BT010723">
    <property type="protein sequence ID" value="AAR20780.1"/>
    <property type="status" value="ALT_FRAME"/>
    <property type="molecule type" value="mRNA"/>
</dbReference>
<dbReference type="EMBL" id="BT010991">
    <property type="protein sequence ID" value="AAR24769.1"/>
    <property type="status" value="ALT_FRAME"/>
    <property type="molecule type" value="mRNA"/>
</dbReference>
<dbReference type="PIR" id="A96670">
    <property type="entry name" value="A96670"/>
</dbReference>
<dbReference type="RefSeq" id="NP_001321642.1">
    <property type="nucleotide sequence ID" value="NM_001334174.1"/>
</dbReference>
<dbReference type="RefSeq" id="NP_001321643.1">
    <property type="nucleotide sequence ID" value="NM_001334175.1"/>
</dbReference>
<dbReference type="RefSeq" id="NP_176650.1">
    <property type="nucleotide sequence ID" value="NM_105144.4"/>
</dbReference>
<dbReference type="SMR" id="F4I878"/>
<dbReference type="BioGRID" id="27998">
    <property type="interactions" value="1"/>
</dbReference>
<dbReference type="FunCoup" id="F4I878">
    <property type="interactions" value="214"/>
</dbReference>
<dbReference type="IntAct" id="F4I878">
    <property type="interactions" value="1"/>
</dbReference>
<dbReference type="STRING" id="3702.F4I878"/>
<dbReference type="PaxDb" id="3702-AT1G64690.1"/>
<dbReference type="ProteomicsDB" id="240548"/>
<dbReference type="EnsemblPlants" id="AT1G64690.1">
    <property type="protein sequence ID" value="AT1G64690.1"/>
    <property type="gene ID" value="AT1G64690"/>
</dbReference>
<dbReference type="EnsemblPlants" id="AT1G64690.2">
    <property type="protein sequence ID" value="AT1G64690.2"/>
    <property type="gene ID" value="AT1G64690"/>
</dbReference>
<dbReference type="GeneID" id="842777"/>
<dbReference type="Gramene" id="AT1G64690.1">
    <property type="protein sequence ID" value="AT1G64690.1"/>
    <property type="gene ID" value="AT1G64690"/>
</dbReference>
<dbReference type="Gramene" id="AT1G64690.2">
    <property type="protein sequence ID" value="AT1G64690.2"/>
    <property type="gene ID" value="AT1G64690"/>
</dbReference>
<dbReference type="KEGG" id="ath:AT1G64690"/>
<dbReference type="Araport" id="AT1G64690"/>
<dbReference type="TAIR" id="AT1G64690">
    <property type="gene designation" value="BLT"/>
</dbReference>
<dbReference type="eggNOG" id="ENOG502QW9F">
    <property type="taxonomic scope" value="Eukaryota"/>
</dbReference>
<dbReference type="HOGENOM" id="CLU_057954_0_0_1"/>
<dbReference type="InParanoid" id="F4I878"/>
<dbReference type="PRO" id="PR:F4I878"/>
<dbReference type="Proteomes" id="UP000006548">
    <property type="component" value="Chromosome 1"/>
</dbReference>
<dbReference type="ExpressionAtlas" id="F4I878">
    <property type="expression patterns" value="baseline and differential"/>
</dbReference>
<dbReference type="GO" id="GO:0010091">
    <property type="term" value="P:trichome branching"/>
    <property type="evidence" value="ECO:0000315"/>
    <property type="project" value="UniProtKB"/>
</dbReference>
<dbReference type="GO" id="GO:0010090">
    <property type="term" value="P:trichome morphogenesis"/>
    <property type="evidence" value="ECO:0000315"/>
    <property type="project" value="TAIR"/>
</dbReference>
<dbReference type="InterPro" id="IPR043424">
    <property type="entry name" value="BLT-like"/>
</dbReference>
<dbReference type="PANTHER" id="PTHR31071">
    <property type="entry name" value="GB|AAF24581.1"/>
    <property type="match status" value="1"/>
</dbReference>
<dbReference type="PANTHER" id="PTHR31071:SF39">
    <property type="entry name" value="PROTEIN BRANCHLESS TRICHOME"/>
    <property type="match status" value="1"/>
</dbReference>
<comment type="function">
    <text evidence="3 4">Acts as a key regulator of trichome branching. Could participate with STI in the same pathway. Also plays a role in integrating endoreplication levels with cell shape.</text>
</comment>
<comment type="subunit">
    <text evidence="4">Interacts with STI.</text>
</comment>
<comment type="disruption phenotype">
    <text evidence="3 4">Shows trichomes with no branching.</text>
</comment>
<comment type="sequence caution" evidence="5">
    <conflict type="erroneous gene model prediction">
        <sequence resource="EMBL-CDS" id="AAD38245"/>
    </conflict>
</comment>
<comment type="sequence caution" evidence="5">
    <conflict type="erroneous gene model prediction">
        <sequence resource="EMBL-CDS" id="AAF19682"/>
    </conflict>
</comment>
<comment type="sequence caution" evidence="5">
    <conflict type="frameshift">
        <sequence resource="EMBL-CDS" id="AAR20780"/>
    </conflict>
</comment>
<comment type="sequence caution" evidence="5">
    <conflict type="frameshift">
        <sequence resource="EMBL-CDS" id="AAR24769"/>
    </conflict>
</comment>
<name>BLT_ARATH</name>
<evidence type="ECO:0000255" key="1"/>
<evidence type="ECO:0000256" key="2">
    <source>
        <dbReference type="SAM" id="MobiDB-lite"/>
    </source>
</evidence>
<evidence type="ECO:0000269" key="3">
    <source>
    </source>
</evidence>
<evidence type="ECO:0000269" key="4">
    <source>
    </source>
</evidence>
<evidence type="ECO:0000305" key="5"/>
<reference key="1">
    <citation type="journal article" date="2000" name="Nature">
        <title>Sequence and analysis of chromosome 1 of the plant Arabidopsis thaliana.</title>
        <authorList>
            <person name="Theologis A."/>
            <person name="Ecker J.R."/>
            <person name="Palm C.J."/>
            <person name="Federspiel N.A."/>
            <person name="Kaul S."/>
            <person name="White O."/>
            <person name="Alonso J."/>
            <person name="Altafi H."/>
            <person name="Araujo R."/>
            <person name="Bowman C.L."/>
            <person name="Brooks S.Y."/>
            <person name="Buehler E."/>
            <person name="Chan A."/>
            <person name="Chao Q."/>
            <person name="Chen H."/>
            <person name="Cheuk R.F."/>
            <person name="Chin C.W."/>
            <person name="Chung M.K."/>
            <person name="Conn L."/>
            <person name="Conway A.B."/>
            <person name="Conway A.R."/>
            <person name="Creasy T.H."/>
            <person name="Dewar K."/>
            <person name="Dunn P."/>
            <person name="Etgu P."/>
            <person name="Feldblyum T.V."/>
            <person name="Feng J.-D."/>
            <person name="Fong B."/>
            <person name="Fujii C.Y."/>
            <person name="Gill J.E."/>
            <person name="Goldsmith A.D."/>
            <person name="Haas B."/>
            <person name="Hansen N.F."/>
            <person name="Hughes B."/>
            <person name="Huizar L."/>
            <person name="Hunter J.L."/>
            <person name="Jenkins J."/>
            <person name="Johnson-Hopson C."/>
            <person name="Khan S."/>
            <person name="Khaykin E."/>
            <person name="Kim C.J."/>
            <person name="Koo H.L."/>
            <person name="Kremenetskaia I."/>
            <person name="Kurtz D.B."/>
            <person name="Kwan A."/>
            <person name="Lam B."/>
            <person name="Langin-Hooper S."/>
            <person name="Lee A."/>
            <person name="Lee J.M."/>
            <person name="Lenz C.A."/>
            <person name="Li J.H."/>
            <person name="Li Y.-P."/>
            <person name="Lin X."/>
            <person name="Liu S.X."/>
            <person name="Liu Z.A."/>
            <person name="Luros J.S."/>
            <person name="Maiti R."/>
            <person name="Marziali A."/>
            <person name="Militscher J."/>
            <person name="Miranda M."/>
            <person name="Nguyen M."/>
            <person name="Nierman W.C."/>
            <person name="Osborne B.I."/>
            <person name="Pai G."/>
            <person name="Peterson J."/>
            <person name="Pham P.K."/>
            <person name="Rizzo M."/>
            <person name="Rooney T."/>
            <person name="Rowley D."/>
            <person name="Sakano H."/>
            <person name="Salzberg S.L."/>
            <person name="Schwartz J.R."/>
            <person name="Shinn P."/>
            <person name="Southwick A.M."/>
            <person name="Sun H."/>
            <person name="Tallon L.J."/>
            <person name="Tambunga G."/>
            <person name="Toriumi M.J."/>
            <person name="Town C.D."/>
            <person name="Utterback T."/>
            <person name="Van Aken S."/>
            <person name="Vaysberg M."/>
            <person name="Vysotskaia V.S."/>
            <person name="Walker M."/>
            <person name="Wu D."/>
            <person name="Yu G."/>
            <person name="Fraser C.M."/>
            <person name="Venter J.C."/>
            <person name="Davis R.W."/>
        </authorList>
    </citation>
    <scope>NUCLEOTIDE SEQUENCE [LARGE SCALE GENOMIC DNA]</scope>
    <source>
        <strain>cv. Columbia</strain>
    </source>
</reference>
<reference key="2">
    <citation type="journal article" date="2017" name="Plant J.">
        <title>Araport11: a complete reannotation of the Arabidopsis thaliana reference genome.</title>
        <authorList>
            <person name="Cheng C.Y."/>
            <person name="Krishnakumar V."/>
            <person name="Chan A.P."/>
            <person name="Thibaud-Nissen F."/>
            <person name="Schobel S."/>
            <person name="Town C.D."/>
        </authorList>
    </citation>
    <scope>GENOME REANNOTATION</scope>
    <source>
        <strain>cv. Columbia</strain>
    </source>
</reference>
<reference key="3">
    <citation type="submission" date="2003-12" db="EMBL/GenBank/DDBJ databases">
        <title>Arabidopsis ORF clones.</title>
        <authorList>
            <person name="Shinn P."/>
            <person name="Chen H."/>
            <person name="Cheuk R.F."/>
            <person name="Kim C.J."/>
            <person name="Ecker J.R."/>
        </authorList>
    </citation>
    <scope>NUCLEOTIDE SEQUENCE [LARGE SCALE GENOMIC DNA]</scope>
    <source>
        <strain>cv. Columbia</strain>
    </source>
</reference>
<reference key="4">
    <citation type="journal article" date="2009" name="Mol. Plant">
        <title>Transcriptome analysis of Arabidopsis wild-type and gl3-sst sim trichomes identifies four additional genes required for trichome development.</title>
        <authorList>
            <person name="Marks M.D."/>
            <person name="Wenger J.P."/>
            <person name="Gilding E."/>
            <person name="Jilk R."/>
            <person name="Dixon R.A."/>
        </authorList>
    </citation>
    <scope>DISRUPTION PHENOTYPE</scope>
    <scope>FUNCTION</scope>
</reference>
<reference key="5">
    <citation type="journal article" date="2011" name="Development">
        <title>BRANCHLESS TRICHOMES links cell shape and cell cycle control in Arabidopsis trichomes.</title>
        <authorList>
            <person name="Kasili R."/>
            <person name="Huang C.C."/>
            <person name="Walker J.D."/>
            <person name="Simmons L.A."/>
            <person name="Zhou J."/>
            <person name="Faulk C."/>
            <person name="Huelskamp M."/>
            <person name="Larkin J.C."/>
        </authorList>
    </citation>
    <scope>INTERACTION WITH STI</scope>
    <scope>FUNCTION</scope>
    <scope>DISRUPTION PHENOTYPE</scope>
</reference>
<feature type="chain" id="PRO_0000422981" description="Protein BRANCHLESS TRICHOME">
    <location>
        <begin position="1"/>
        <end position="273"/>
    </location>
</feature>
<feature type="region of interest" description="Disordered" evidence="2">
    <location>
        <begin position="1"/>
        <end position="30"/>
    </location>
</feature>
<feature type="coiled-coil region" evidence="1">
    <location>
        <begin position="69"/>
        <end position="199"/>
    </location>
</feature>
<feature type="compositionally biased region" description="Polar residues" evidence="2">
    <location>
        <begin position="1"/>
        <end position="12"/>
    </location>
</feature>
<feature type="sequence conflict" description="In Ref. 3; AAR20780/AAR24769." evidence="5" ref="3">
    <original>L</original>
    <variation>P</variation>
    <location>
        <position position="103"/>
    </location>
</feature>
<keyword id="KW-0175">Coiled coil</keyword>
<keyword id="KW-1185">Reference proteome</keyword>
<accession>F4I878</accession>
<accession>Q6NPD3</accession>
<accession>Q9XIS2</accession>